<dbReference type="EC" id="5.3.4.1" evidence="5 9"/>
<dbReference type="EMBL" id="D49489">
    <property type="protein sequence ID" value="BAA08450.1"/>
    <property type="molecule type" value="mRNA"/>
</dbReference>
<dbReference type="EMBL" id="AK127433">
    <property type="protein sequence ID" value="BAC86977.1"/>
    <property type="molecule type" value="mRNA"/>
</dbReference>
<dbReference type="EMBL" id="AK131234">
    <property type="protein sequence ID" value="BAG54757.1"/>
    <property type="molecule type" value="mRNA"/>
</dbReference>
<dbReference type="EMBL" id="AK289428">
    <property type="protein sequence ID" value="BAF82117.1"/>
    <property type="molecule type" value="mRNA"/>
</dbReference>
<dbReference type="EMBL" id="AK294347">
    <property type="protein sequence ID" value="BAH11740.1"/>
    <property type="molecule type" value="mRNA"/>
</dbReference>
<dbReference type="EMBL" id="AK297547">
    <property type="protein sequence ID" value="BAH12614.1"/>
    <property type="molecule type" value="mRNA"/>
</dbReference>
<dbReference type="EMBL" id="AC092687">
    <property type="protein sequence ID" value="AAY24070.1"/>
    <property type="molecule type" value="Genomic_DNA"/>
</dbReference>
<dbReference type="EMBL" id="CH471053">
    <property type="protein sequence ID" value="EAX00950.1"/>
    <property type="molecule type" value="Genomic_DNA"/>
</dbReference>
<dbReference type="EMBL" id="BC001312">
    <property type="protein sequence ID" value="AAH01312.1"/>
    <property type="molecule type" value="mRNA"/>
</dbReference>
<dbReference type="EMBL" id="U79278">
    <property type="protein sequence ID" value="AAB50217.1"/>
    <property type="molecule type" value="mRNA"/>
</dbReference>
<dbReference type="CCDS" id="CCDS1675.1">
    <molecule id="Q15084-1"/>
</dbReference>
<dbReference type="CCDS" id="CCDS62852.1">
    <molecule id="Q15084-3"/>
</dbReference>
<dbReference type="CCDS" id="CCDS62853.1">
    <molecule id="Q15084-4"/>
</dbReference>
<dbReference type="CCDS" id="CCDS62854.1">
    <molecule id="Q15084-2"/>
</dbReference>
<dbReference type="CCDS" id="CCDS62855.1">
    <molecule id="Q15084-5"/>
</dbReference>
<dbReference type="PIR" id="JC4369">
    <property type="entry name" value="JC4369"/>
</dbReference>
<dbReference type="RefSeq" id="NP_001269633.1">
    <molecule id="Q15084-2"/>
    <property type="nucleotide sequence ID" value="NM_001282704.2"/>
</dbReference>
<dbReference type="RefSeq" id="NP_001269634.1">
    <molecule id="Q15084-5"/>
    <property type="nucleotide sequence ID" value="NM_001282705.2"/>
</dbReference>
<dbReference type="RefSeq" id="NP_001269635.1">
    <molecule id="Q15084-4"/>
    <property type="nucleotide sequence ID" value="NM_001282706.2"/>
</dbReference>
<dbReference type="RefSeq" id="NP_001269636.1">
    <molecule id="Q15084-3"/>
    <property type="nucleotide sequence ID" value="NM_001282707.2"/>
</dbReference>
<dbReference type="RefSeq" id="NP_005733.1">
    <molecule id="Q15084-1"/>
    <property type="nucleotide sequence ID" value="NM_005742.4"/>
</dbReference>
<dbReference type="PDB" id="1X5D">
    <property type="method" value="NMR"/>
    <property type="chains" value="A=161-280"/>
</dbReference>
<dbReference type="PDB" id="3VWW">
    <property type="method" value="X-ray"/>
    <property type="resolution" value="1.93 A"/>
    <property type="chains" value="A/B=25-140"/>
</dbReference>
<dbReference type="PDB" id="3W8J">
    <property type="method" value="X-ray"/>
    <property type="resolution" value="2.10 A"/>
    <property type="chains" value="A/B=20-140"/>
</dbReference>
<dbReference type="PDB" id="4EF0">
    <property type="method" value="X-ray"/>
    <property type="resolution" value="1.50 A"/>
    <property type="chains" value="A/B=27-140"/>
</dbReference>
<dbReference type="PDB" id="4GWR">
    <property type="method" value="X-ray"/>
    <property type="resolution" value="1.81 A"/>
    <property type="chains" value="A/B=160-274"/>
</dbReference>
<dbReference type="PDB" id="8CPQ">
    <property type="method" value="X-ray"/>
    <property type="resolution" value="1.80 A"/>
    <property type="chains" value="A=274-427"/>
</dbReference>
<dbReference type="PDBsum" id="1X5D"/>
<dbReference type="PDBsum" id="3VWW"/>
<dbReference type="PDBsum" id="3W8J"/>
<dbReference type="PDBsum" id="4EF0"/>
<dbReference type="PDBsum" id="4GWR"/>
<dbReference type="PDBsum" id="8CPQ"/>
<dbReference type="SMR" id="Q15084"/>
<dbReference type="BioGRID" id="115434">
    <property type="interactions" value="335"/>
</dbReference>
<dbReference type="CORUM" id="Q15084"/>
<dbReference type="FunCoup" id="Q15084">
    <property type="interactions" value="2281"/>
</dbReference>
<dbReference type="IntAct" id="Q15084">
    <property type="interactions" value="143"/>
</dbReference>
<dbReference type="MINT" id="Q15084"/>
<dbReference type="STRING" id="9606.ENSP00000385385"/>
<dbReference type="BindingDB" id="Q15084"/>
<dbReference type="ChEMBL" id="CHEMBL2146308"/>
<dbReference type="GlyGen" id="Q15084">
    <property type="glycosylation" value="1 site, 1 O-linked glycan (1 site)"/>
</dbReference>
<dbReference type="iPTMnet" id="Q15084"/>
<dbReference type="PhosphoSitePlus" id="Q15084"/>
<dbReference type="SwissPalm" id="Q15084"/>
<dbReference type="BioMuta" id="PDIA6"/>
<dbReference type="DMDM" id="2501205"/>
<dbReference type="OGP" id="Q15084"/>
<dbReference type="REPRODUCTION-2DPAGE" id="IPI00644989"/>
<dbReference type="REPRODUCTION-2DPAGE" id="Q15084"/>
<dbReference type="CPTAC" id="CPTAC-250"/>
<dbReference type="jPOST" id="Q15084"/>
<dbReference type="MassIVE" id="Q15084"/>
<dbReference type="PaxDb" id="9606-ENSP00000385385"/>
<dbReference type="PeptideAtlas" id="Q15084"/>
<dbReference type="PRIDE" id="Q15084"/>
<dbReference type="ProteomicsDB" id="30450"/>
<dbReference type="ProteomicsDB" id="60433">
    <molecule id="Q15084-1"/>
</dbReference>
<dbReference type="ProteomicsDB" id="60434">
    <molecule id="Q15084-2"/>
</dbReference>
<dbReference type="ProteomicsDB" id="6087"/>
<dbReference type="ProteomicsDB" id="6408"/>
<dbReference type="Pumba" id="Q15084"/>
<dbReference type="Antibodypedia" id="12607">
    <property type="antibodies" value="275 antibodies from 37 providers"/>
</dbReference>
<dbReference type="DNASU" id="10130"/>
<dbReference type="Ensembl" id="ENST00000272227.8">
    <molecule id="Q15084-1"/>
    <property type="protein sequence ID" value="ENSP00000272227.4"/>
    <property type="gene ID" value="ENSG00000143870.13"/>
</dbReference>
<dbReference type="Ensembl" id="ENST00000381611.8">
    <molecule id="Q15084-4"/>
    <property type="protein sequence ID" value="ENSP00000371024.4"/>
    <property type="gene ID" value="ENSG00000143870.13"/>
</dbReference>
<dbReference type="Ensembl" id="ENST00000404371.6">
    <molecule id="Q15084-2"/>
    <property type="protein sequence ID" value="ENSP00000385385.2"/>
    <property type="gene ID" value="ENSG00000143870.13"/>
</dbReference>
<dbReference type="Ensembl" id="ENST00000404824.2">
    <molecule id="Q15084-5"/>
    <property type="protein sequence ID" value="ENSP00000384459.2"/>
    <property type="gene ID" value="ENSG00000143870.13"/>
</dbReference>
<dbReference type="Ensembl" id="ENST00000540494.5">
    <molecule id="Q15084-3"/>
    <property type="protein sequence ID" value="ENSP00000438778.1"/>
    <property type="gene ID" value="ENSG00000143870.13"/>
</dbReference>
<dbReference type="Ensembl" id="ENST00000617249.4">
    <molecule id="Q15084-2"/>
    <property type="protein sequence ID" value="ENSP00000481892.1"/>
    <property type="gene ID" value="ENSG00000143870.13"/>
</dbReference>
<dbReference type="GeneID" id="10130"/>
<dbReference type="KEGG" id="hsa:10130"/>
<dbReference type="MANE-Select" id="ENST00000272227.8">
    <property type="protein sequence ID" value="ENSP00000272227.4"/>
    <property type="RefSeq nucleotide sequence ID" value="NM_005742.4"/>
    <property type="RefSeq protein sequence ID" value="NP_005733.1"/>
</dbReference>
<dbReference type="UCSC" id="uc002rau.5">
    <molecule id="Q15084-1"/>
    <property type="organism name" value="human"/>
</dbReference>
<dbReference type="AGR" id="HGNC:30168"/>
<dbReference type="CTD" id="10130"/>
<dbReference type="DisGeNET" id="10130"/>
<dbReference type="GeneCards" id="PDIA6"/>
<dbReference type="HGNC" id="HGNC:30168">
    <property type="gene designation" value="PDIA6"/>
</dbReference>
<dbReference type="HPA" id="ENSG00000143870">
    <property type="expression patterns" value="Low tissue specificity"/>
</dbReference>
<dbReference type="MIM" id="611099">
    <property type="type" value="gene"/>
</dbReference>
<dbReference type="neXtProt" id="NX_Q15084"/>
<dbReference type="OpenTargets" id="ENSG00000143870"/>
<dbReference type="PharmGKB" id="PA134977905"/>
<dbReference type="VEuPathDB" id="HostDB:ENSG00000143870"/>
<dbReference type="eggNOG" id="KOG0191">
    <property type="taxonomic scope" value="Eukaryota"/>
</dbReference>
<dbReference type="GeneTree" id="ENSGT00940000155646"/>
<dbReference type="HOGENOM" id="CLU_030311_0_0_1"/>
<dbReference type="InParanoid" id="Q15084"/>
<dbReference type="OMA" id="KQKLWGW"/>
<dbReference type="OrthoDB" id="10264505at2759"/>
<dbReference type="PAN-GO" id="Q15084">
    <property type="GO annotations" value="3 GO annotations based on evolutionary models"/>
</dbReference>
<dbReference type="PhylomeDB" id="Q15084"/>
<dbReference type="TreeFam" id="TF315231"/>
<dbReference type="PathwayCommons" id="Q15084"/>
<dbReference type="Reactome" id="R-HSA-381038">
    <property type="pathway name" value="XBP1(S) activates chaperone genes"/>
</dbReference>
<dbReference type="Reactome" id="R-HSA-381426">
    <property type="pathway name" value="Regulation of Insulin-like Growth Factor (IGF) transport and uptake by Insulin-like Growth Factor Binding Proteins (IGFBPs)"/>
</dbReference>
<dbReference type="Reactome" id="R-HSA-8957275">
    <property type="pathway name" value="Post-translational protein phosphorylation"/>
</dbReference>
<dbReference type="SignaLink" id="Q15084"/>
<dbReference type="SIGNOR" id="Q15084"/>
<dbReference type="BioGRID-ORCS" id="10130">
    <property type="hits" value="13 hits in 1152 CRISPR screens"/>
</dbReference>
<dbReference type="CD-CODE" id="91857CE7">
    <property type="entry name" value="Nucleolus"/>
</dbReference>
<dbReference type="CD-CODE" id="FB4E32DD">
    <property type="entry name" value="Presynaptic clusters and postsynaptic densities"/>
</dbReference>
<dbReference type="ChiTaRS" id="PDIA6">
    <property type="organism name" value="human"/>
</dbReference>
<dbReference type="EvolutionaryTrace" id="Q15084"/>
<dbReference type="GenomeRNAi" id="10130"/>
<dbReference type="Pharos" id="Q15084">
    <property type="development level" value="Tchem"/>
</dbReference>
<dbReference type="PRO" id="PR:Q15084"/>
<dbReference type="Proteomes" id="UP000005640">
    <property type="component" value="Chromosome 2"/>
</dbReference>
<dbReference type="RNAct" id="Q15084">
    <property type="molecule type" value="protein"/>
</dbReference>
<dbReference type="Bgee" id="ENSG00000143870">
    <property type="expression patterns" value="Expressed in corpus epididymis and 215 other cell types or tissues"/>
</dbReference>
<dbReference type="ExpressionAtlas" id="Q15084">
    <property type="expression patterns" value="baseline and differential"/>
</dbReference>
<dbReference type="GO" id="GO:0034451">
    <property type="term" value="C:centriolar satellite"/>
    <property type="evidence" value="ECO:0000314"/>
    <property type="project" value="HPA"/>
</dbReference>
<dbReference type="GO" id="GO:0036064">
    <property type="term" value="C:ciliary basal body"/>
    <property type="evidence" value="ECO:0000314"/>
    <property type="project" value="HPA"/>
</dbReference>
<dbReference type="GO" id="GO:0005929">
    <property type="term" value="C:cilium"/>
    <property type="evidence" value="ECO:0000314"/>
    <property type="project" value="HPA"/>
</dbReference>
<dbReference type="GO" id="GO:0005783">
    <property type="term" value="C:endoplasmic reticulum"/>
    <property type="evidence" value="ECO:0000314"/>
    <property type="project" value="HPA"/>
</dbReference>
<dbReference type="GO" id="GO:0034663">
    <property type="term" value="C:endoplasmic reticulum chaperone complex"/>
    <property type="evidence" value="ECO:0000250"/>
    <property type="project" value="ParkinsonsUK-UCL"/>
</dbReference>
<dbReference type="GO" id="GO:0005788">
    <property type="term" value="C:endoplasmic reticulum lumen"/>
    <property type="evidence" value="ECO:0000304"/>
    <property type="project" value="Reactome"/>
</dbReference>
<dbReference type="GO" id="GO:0005789">
    <property type="term" value="C:endoplasmic reticulum membrane"/>
    <property type="evidence" value="ECO:0000304"/>
    <property type="project" value="Reactome"/>
</dbReference>
<dbReference type="GO" id="GO:0005793">
    <property type="term" value="C:endoplasmic reticulum-Golgi intermediate compartment"/>
    <property type="evidence" value="ECO:0000314"/>
    <property type="project" value="UniProtKB"/>
</dbReference>
<dbReference type="GO" id="GO:0070062">
    <property type="term" value="C:extracellular exosome"/>
    <property type="evidence" value="ECO:0007005"/>
    <property type="project" value="UniProtKB"/>
</dbReference>
<dbReference type="GO" id="GO:0005615">
    <property type="term" value="C:extracellular space"/>
    <property type="evidence" value="ECO:0000314"/>
    <property type="project" value="UniProtKB"/>
</dbReference>
<dbReference type="GO" id="GO:0042470">
    <property type="term" value="C:melanosome"/>
    <property type="evidence" value="ECO:0007669"/>
    <property type="project" value="UniProtKB-SubCell"/>
</dbReference>
<dbReference type="GO" id="GO:0005886">
    <property type="term" value="C:plasma membrane"/>
    <property type="evidence" value="ECO:0007669"/>
    <property type="project" value="UniProtKB-SubCell"/>
</dbReference>
<dbReference type="GO" id="GO:0003756">
    <property type="term" value="F:protein disulfide isomerase activity"/>
    <property type="evidence" value="ECO:0000304"/>
    <property type="project" value="ProtInc"/>
</dbReference>
<dbReference type="GO" id="GO:0015035">
    <property type="term" value="F:protein-disulfide reductase activity"/>
    <property type="evidence" value="ECO:0000314"/>
    <property type="project" value="UniProtKB"/>
</dbReference>
<dbReference type="GO" id="GO:0006457">
    <property type="term" value="P:protein folding"/>
    <property type="evidence" value="ECO:0000304"/>
    <property type="project" value="ProtInc"/>
</dbReference>
<dbReference type="GO" id="GO:0034976">
    <property type="term" value="P:response to endoplasmic reticulum stress"/>
    <property type="evidence" value="ECO:0000318"/>
    <property type="project" value="GO_Central"/>
</dbReference>
<dbReference type="CDD" id="cd02983">
    <property type="entry name" value="P5_C"/>
    <property type="match status" value="1"/>
</dbReference>
<dbReference type="CDD" id="cd03001">
    <property type="entry name" value="PDI_a_P5"/>
    <property type="match status" value="2"/>
</dbReference>
<dbReference type="FunFam" id="3.40.30.10:FF:000032">
    <property type="entry name" value="Protein disulfide-isomerase A6 homolog"/>
    <property type="match status" value="1"/>
</dbReference>
<dbReference type="FunFam" id="3.40.30.10:FF:000050">
    <property type="entry name" value="protein disulfide-isomerase A6 isoform X1"/>
    <property type="match status" value="1"/>
</dbReference>
<dbReference type="Gene3D" id="3.40.30.10">
    <property type="entry name" value="Glutaredoxin"/>
    <property type="match status" value="2"/>
</dbReference>
<dbReference type="InterPro" id="IPR005788">
    <property type="entry name" value="PDI_thioredoxin-like_dom"/>
</dbReference>
<dbReference type="InterPro" id="IPR036249">
    <property type="entry name" value="Thioredoxin-like_sf"/>
</dbReference>
<dbReference type="InterPro" id="IPR017937">
    <property type="entry name" value="Thioredoxin_CS"/>
</dbReference>
<dbReference type="InterPro" id="IPR013766">
    <property type="entry name" value="Thioredoxin_domain"/>
</dbReference>
<dbReference type="NCBIfam" id="TIGR01126">
    <property type="entry name" value="pdi_dom"/>
    <property type="match status" value="2"/>
</dbReference>
<dbReference type="PANTHER" id="PTHR45815">
    <property type="entry name" value="PROTEIN DISULFIDE-ISOMERASE A6"/>
    <property type="match status" value="1"/>
</dbReference>
<dbReference type="PANTHER" id="PTHR45815:SF3">
    <property type="entry name" value="PROTEIN DISULFIDE-ISOMERASE A6"/>
    <property type="match status" value="1"/>
</dbReference>
<dbReference type="Pfam" id="PF24541">
    <property type="entry name" value="Thioredox_PDIA6_C"/>
    <property type="match status" value="1"/>
</dbReference>
<dbReference type="Pfam" id="PF00085">
    <property type="entry name" value="Thioredoxin"/>
    <property type="match status" value="2"/>
</dbReference>
<dbReference type="PRINTS" id="PR00421">
    <property type="entry name" value="THIOREDOXIN"/>
</dbReference>
<dbReference type="SUPFAM" id="SSF52833">
    <property type="entry name" value="Thioredoxin-like"/>
    <property type="match status" value="3"/>
</dbReference>
<dbReference type="PROSITE" id="PS00014">
    <property type="entry name" value="ER_TARGET"/>
    <property type="match status" value="1"/>
</dbReference>
<dbReference type="PROSITE" id="PS00194">
    <property type="entry name" value="THIOREDOXIN_1"/>
    <property type="match status" value="2"/>
</dbReference>
<dbReference type="PROSITE" id="PS51352">
    <property type="entry name" value="THIOREDOXIN_2"/>
    <property type="match status" value="2"/>
</dbReference>
<keyword id="KW-0002">3D-structure</keyword>
<keyword id="KW-0025">Alternative splicing</keyword>
<keyword id="KW-1003">Cell membrane</keyword>
<keyword id="KW-0143">Chaperone</keyword>
<keyword id="KW-0903">Direct protein sequencing</keyword>
<keyword id="KW-1015">Disulfide bond</keyword>
<keyword id="KW-0256">Endoplasmic reticulum</keyword>
<keyword id="KW-0413">Isomerase</keyword>
<keyword id="KW-0472">Membrane</keyword>
<keyword id="KW-0597">Phosphoprotein</keyword>
<keyword id="KW-1267">Proteomics identification</keyword>
<keyword id="KW-0676">Redox-active center</keyword>
<keyword id="KW-1185">Reference proteome</keyword>
<keyword id="KW-0677">Repeat</keyword>
<keyword id="KW-0732">Signal</keyword>
<feature type="signal peptide" evidence="9 12 26">
    <location>
        <begin position="1"/>
        <end position="19"/>
    </location>
</feature>
<feature type="chain" id="PRO_0000034236" description="Protein disulfide-isomerase A6">
    <location>
        <begin position="20"/>
        <end position="440"/>
    </location>
</feature>
<feature type="domain" description="Thioredoxin 1" evidence="2">
    <location>
        <begin position="20"/>
        <end position="133"/>
    </location>
</feature>
<feature type="domain" description="Thioredoxin 2" evidence="2">
    <location>
        <begin position="154"/>
        <end position="287"/>
    </location>
</feature>
<feature type="region of interest" description="Disordered" evidence="4">
    <location>
        <begin position="141"/>
        <end position="161"/>
    </location>
</feature>
<feature type="short sequence motif" description="Prevents secretion from ER" evidence="3">
    <location>
        <begin position="437"/>
        <end position="440"/>
    </location>
</feature>
<feature type="compositionally biased region" description="Basic and acidic residues" evidence="4">
    <location>
        <begin position="152"/>
        <end position="161"/>
    </location>
</feature>
<feature type="active site" description="Nucleophile" evidence="1">
    <location>
        <position position="55"/>
    </location>
</feature>
<feature type="active site" description="Nucleophile" evidence="1">
    <location>
        <position position="58"/>
    </location>
</feature>
<feature type="active site" description="Nucleophile" evidence="1">
    <location>
        <position position="190"/>
    </location>
</feature>
<feature type="active site" description="Nucleophile" evidence="1">
    <location>
        <position position="193"/>
    </location>
</feature>
<feature type="site" description="Contributes to redox potential value" evidence="1">
    <location>
        <position position="56"/>
    </location>
</feature>
<feature type="site" description="Contributes to redox potential value" evidence="1">
    <location>
        <position position="57"/>
    </location>
</feature>
<feature type="site" description="Lowers pKa of C-terminal Cys of first active site" evidence="1">
    <location>
        <position position="118"/>
    </location>
</feature>
<feature type="site" description="Contributes to redox potential value" evidence="1">
    <location>
        <position position="191"/>
    </location>
</feature>
<feature type="site" description="Contributes to redox potential value" evidence="1">
    <location>
        <position position="192"/>
    </location>
</feature>
<feature type="site" description="Lowers pKa of C-terminal Cys of second active site" evidence="1">
    <location>
        <position position="256"/>
    </location>
</feature>
<feature type="modified residue" description="Phosphoserine" evidence="25">
    <location>
        <position position="129"/>
    </location>
</feature>
<feature type="modified residue" description="Phosphoserine; by FAM20C" evidence="14">
    <location>
        <position position="156"/>
    </location>
</feature>
<feature type="modified residue" description="Phosphoserine" evidence="24">
    <location>
        <position position="158"/>
    </location>
</feature>
<feature type="modified residue" description="Phosphoserine" evidence="18 19 20 21 22 23 25">
    <location>
        <position position="428"/>
    </location>
</feature>
<feature type="disulfide bond" description="Redox-active" evidence="2">
    <location>
        <begin position="55"/>
        <end position="58"/>
    </location>
</feature>
<feature type="disulfide bond" description="Redox-active" evidence="2">
    <location>
        <begin position="190"/>
        <end position="193"/>
    </location>
</feature>
<feature type="splice variant" id="VSP_021803" description="In isoform 2." evidence="16">
    <original>MALLVL</original>
    <variation>MRRDLREKLVWVCRPLAPVEVPANISSDFQPCSPTSPAHSLSRKSPIMYPSTTMANAP</variation>
    <location>
        <begin position="1"/>
        <end position="6"/>
    </location>
</feature>
<feature type="splice variant" id="VSP_055173" description="In isoform 4." evidence="16">
    <original>MALLVL</original>
    <variation>MYPSTTMANAP</variation>
    <location>
        <begin position="1"/>
        <end position="6"/>
    </location>
</feature>
<feature type="splice variant" id="VSP_055174" description="In isoform 5." evidence="16">
    <original>MALLVL</original>
    <variation>MRIITAPASKVSRGSNELMILARRSDRGSPTSPAHSLSRKSPIMYPSTTMANAP</variation>
    <location>
        <begin position="1"/>
        <end position="6"/>
    </location>
</feature>
<feature type="splice variant" id="VSP_054370" description="In isoform 3." evidence="16">
    <original>MALLV</original>
    <variation>MI</variation>
    <location>
        <begin position="1"/>
        <end position="5"/>
    </location>
</feature>
<feature type="sequence variant" id="VAR_022152" description="In dbSNP:rs4807." evidence="8 15">
    <original>K</original>
    <variation>R</variation>
    <location>
        <position position="214"/>
    </location>
</feature>
<feature type="mutagenesis site" description="50% decrease in enzyme activity; when associated with S-58. Abolishes enzyme activity; when associated with S-58; S-190 and S-193." evidence="5">
    <original>C</original>
    <variation>S</variation>
    <location>
        <position position="55"/>
    </location>
</feature>
<feature type="mutagenesis site" description="Accelerates dephosphorylation of ERN1; when associated with A-193." evidence="13">
    <original>C</original>
    <variation>A</variation>
    <location>
        <position position="58"/>
    </location>
</feature>
<feature type="mutagenesis site" description="50% decrease in enzyme activity; when associated with S-55. 90% decrease in enzyme activity; when associated with S-193. Abolishes enzyme activity; when associated with S-55; S-190 and S-193." evidence="5">
    <original>C</original>
    <variation>S</variation>
    <location>
        <position position="58"/>
    </location>
</feature>
<feature type="mutagenesis site" description="25% decrease in enzyme activity; when associated with S-193. Abolishes enzyme activity; when associated with S-55; S-58 and S-193." evidence="5">
    <original>C</original>
    <variation>S</variation>
    <location>
        <position position="190"/>
    </location>
</feature>
<feature type="mutagenesis site" description="Accelerates dephosphorylation of ERN1; when associated with A-58." evidence="13">
    <original>C</original>
    <variation>A</variation>
    <location>
        <position position="193"/>
    </location>
</feature>
<feature type="mutagenesis site" description="90% decrease in enzyme activity; when associated with S-58. 25% decrease in enzyme activity; when associated with S-190. Abolishes enzyme activity; when associated with S-55; S-58 and S-190." evidence="5">
    <original>C</original>
    <variation>S</variation>
    <location>
        <position position="193"/>
    </location>
</feature>
<feature type="sequence conflict" description="In Ref. 2; BAH12614." evidence="17" ref="2">
    <original>E</original>
    <variation>K</variation>
    <location>
        <position position="64"/>
    </location>
</feature>
<feature type="sequence conflict" description="In Ref. 2; BAH12614." evidence="17" ref="2">
    <original>A</original>
    <variation>V</variation>
    <location>
        <position position="187"/>
    </location>
</feature>
<feature type="strand" evidence="28">
    <location>
        <begin position="28"/>
        <end position="30"/>
    </location>
</feature>
<feature type="turn" evidence="28">
    <location>
        <begin position="32"/>
        <end position="34"/>
    </location>
</feature>
<feature type="helix" evidence="28">
    <location>
        <begin position="35"/>
        <end position="38"/>
    </location>
</feature>
<feature type="turn" evidence="28">
    <location>
        <begin position="39"/>
        <end position="41"/>
    </location>
</feature>
<feature type="strand" evidence="28">
    <location>
        <begin position="46"/>
        <end position="51"/>
    </location>
</feature>
<feature type="helix" evidence="28">
    <location>
        <begin position="56"/>
        <end position="71"/>
    </location>
</feature>
<feature type="turn" evidence="28">
    <location>
        <begin position="72"/>
        <end position="75"/>
    </location>
</feature>
<feature type="strand" evidence="28">
    <location>
        <begin position="76"/>
        <end position="82"/>
    </location>
</feature>
<feature type="turn" evidence="28">
    <location>
        <begin position="83"/>
        <end position="85"/>
    </location>
</feature>
<feature type="helix" evidence="28">
    <location>
        <begin position="87"/>
        <end position="92"/>
    </location>
</feature>
<feature type="strand" evidence="28">
    <location>
        <begin position="100"/>
        <end position="104"/>
    </location>
</feature>
<feature type="helix" evidence="28">
    <location>
        <begin position="120"/>
        <end position="139"/>
    </location>
</feature>
<feature type="strand" evidence="29">
    <location>
        <begin position="162"/>
        <end position="164"/>
    </location>
</feature>
<feature type="turn" evidence="29">
    <location>
        <begin position="167"/>
        <end position="169"/>
    </location>
</feature>
<feature type="helix" evidence="29">
    <location>
        <begin position="170"/>
        <end position="173"/>
    </location>
</feature>
<feature type="turn" evidence="29">
    <location>
        <begin position="174"/>
        <end position="176"/>
    </location>
</feature>
<feature type="strand" evidence="29">
    <location>
        <begin position="178"/>
        <end position="186"/>
    </location>
</feature>
<feature type="helix" evidence="29">
    <location>
        <begin position="191"/>
        <end position="211"/>
    </location>
</feature>
<feature type="strand" evidence="29">
    <location>
        <begin position="214"/>
        <end position="221"/>
    </location>
</feature>
<feature type="helix" evidence="29">
    <location>
        <begin position="222"/>
        <end position="224"/>
    </location>
</feature>
<feature type="helix" evidence="29">
    <location>
        <begin position="226"/>
        <end position="231"/>
    </location>
</feature>
<feature type="strand" evidence="29">
    <location>
        <begin position="236"/>
        <end position="243"/>
    </location>
</feature>
<feature type="strand" evidence="27">
    <location>
        <begin position="247"/>
        <end position="252"/>
    </location>
</feature>
<feature type="helix" evidence="29">
    <location>
        <begin position="258"/>
        <end position="271"/>
    </location>
</feature>
<feature type="strand" evidence="30">
    <location>
        <begin position="278"/>
        <end position="280"/>
    </location>
</feature>
<feature type="helix" evidence="30">
    <location>
        <begin position="284"/>
        <end position="293"/>
    </location>
</feature>
<feature type="strand" evidence="30">
    <location>
        <begin position="294"/>
        <end position="302"/>
    </location>
</feature>
<feature type="helix" evidence="30">
    <location>
        <begin position="305"/>
        <end position="326"/>
    </location>
</feature>
<feature type="helix" evidence="30">
    <location>
        <begin position="328"/>
        <end position="330"/>
    </location>
</feature>
<feature type="strand" evidence="30">
    <location>
        <begin position="333"/>
        <end position="338"/>
    </location>
</feature>
<feature type="turn" evidence="30">
    <location>
        <begin position="339"/>
        <end position="342"/>
    </location>
</feature>
<feature type="helix" evidence="30">
    <location>
        <begin position="343"/>
        <end position="348"/>
    </location>
</feature>
<feature type="strand" evidence="30">
    <location>
        <begin position="356"/>
        <end position="363"/>
    </location>
</feature>
<feature type="turn" evidence="30">
    <location>
        <begin position="364"/>
        <end position="367"/>
    </location>
</feature>
<feature type="strand" evidence="30">
    <location>
        <begin position="368"/>
        <end position="371"/>
    </location>
</feature>
<feature type="helix" evidence="30">
    <location>
        <begin position="378"/>
        <end position="389"/>
    </location>
</feature>
<feature type="helix" evidence="30">
    <location>
        <begin position="399"/>
        <end position="401"/>
    </location>
</feature>
<proteinExistence type="evidence at protein level"/>
<comment type="function">
    <text evidence="5 9 13">May function as a chaperone that inhibits aggregation of misfolded proteins (PubMed:12204115). Negatively regulates the unfolded protein response (UPR) through binding to UPR sensors such as ERN1, which in turn inactivates ERN1 signaling (PubMed:24508390). May also regulate the UPR via the EIF2AK3 UPR sensor (PubMed:24508390). Plays a role in platelet aggregation and activation by agonists such as convulxin, collagen and thrombin (PubMed:15466936).</text>
</comment>
<comment type="catalytic activity">
    <reaction evidence="5 9">
        <text>Catalyzes the rearrangement of -S-S- bonds in proteins.</text>
        <dbReference type="EC" id="5.3.4.1"/>
    </reaction>
</comment>
<comment type="subunit">
    <text evidence="6 9 11 13">Part of a large chaperone multiprotein complex comprising DNAJB11, HSP90B1, HSPA5, HYOU, PDIA2, PDIA4, PDIA6, PPIB, SDF2L1, UGGT1 and very small amounts of ERP29, but not, or at very low levels, CALR nor CANX (PubMed:12475965). Interacts with MICA on the surface of tumor cells, leading to MICA disulfide bond reduction which is required for its release from tumor cells (PubMed:17495932). Interacts with ITGB3 following platelet stimulation (PubMed:15466936). Interacts with ERN1; the interaction is direct (PubMed:24508390). Interacts with EIF2AK3 (PubMed:24508390).</text>
</comment>
<comment type="interaction">
    <interactant intactId="EBI-1043087">
        <id>Q15084</id>
    </interactant>
    <interactant intactId="EBI-77613">
        <id>P05067</id>
        <label>APP</label>
    </interactant>
    <organismsDiffer>false</organismsDiffer>
    <experiments>3</experiments>
</comment>
<comment type="interaction">
    <interactant intactId="EBI-1043087">
        <id>Q15084</id>
    </interactant>
    <interactant intactId="EBI-2515857">
        <id>O43681</id>
        <label>GET3</label>
    </interactant>
    <organismsDiffer>false</organismsDiffer>
    <experiments>3</experiments>
</comment>
<comment type="interaction">
    <interactant intactId="EBI-1043087">
        <id>Q15084</id>
    </interactant>
    <interactant intactId="EBI-354921">
        <id>P11021</id>
        <label>HSPA5</label>
    </interactant>
    <organismsDiffer>false</organismsDiffer>
    <experiments>2</experiments>
</comment>
<comment type="interaction">
    <interactant intactId="EBI-1043087">
        <id>Q15084</id>
    </interactant>
    <interactant intactId="EBI-2211957">
        <id>Q13162</id>
        <label>PRDX4</label>
    </interactant>
    <organismsDiffer>false</organismsDiffer>
    <experiments>2</experiments>
</comment>
<comment type="interaction">
    <interactant intactId="EBI-1043087">
        <id>Q15084</id>
    </interactant>
    <interactant intactId="EBI-744081">
        <id>Q96EQ0</id>
        <label>SGTB</label>
    </interactant>
    <organismsDiffer>false</organismsDiffer>
    <experiments>3</experiments>
</comment>
<comment type="subcellular location">
    <subcellularLocation>
        <location evidence="9">Endoplasmic reticulum lumen</location>
    </subcellularLocation>
    <subcellularLocation>
        <location evidence="9">Cell membrane</location>
    </subcellularLocation>
    <subcellularLocation>
        <location evidence="7 10">Melanosome</location>
    </subcellularLocation>
    <text evidence="7">Identified by mass spectrometry in melanosome fractions from stage I to stage IV (PubMed:12643545).</text>
</comment>
<comment type="alternative products">
    <event type="alternative splicing"/>
    <isoform>
        <id>Q15084-1</id>
        <name>1</name>
        <sequence type="displayed"/>
    </isoform>
    <isoform>
        <id>Q15084-2</id>
        <name>2</name>
        <sequence type="described" ref="VSP_021803"/>
    </isoform>
    <isoform>
        <id>Q15084-3</id>
        <name>3</name>
        <sequence type="described" ref="VSP_054370"/>
    </isoform>
    <isoform>
        <id>Q15084-4</id>
        <name>4</name>
        <sequence type="described" ref="VSP_055173"/>
    </isoform>
    <isoform>
        <id>Q15084-5</id>
        <name>5</name>
        <sequence type="described" ref="VSP_055174"/>
    </isoform>
</comment>
<comment type="tissue specificity">
    <text evidence="9">Expressed in platelets (at protein level).</text>
</comment>
<comment type="similarity">
    <text evidence="17">Belongs to the protein disulfide isomerase family.</text>
</comment>
<gene>
    <name type="primary">PDIA6</name>
    <name type="synonym">ERP5</name>
    <name type="synonym">P5</name>
    <name type="synonym">TXNDC7</name>
</gene>
<accession>Q15084</accession>
<accession>B3KY95</accession>
<accession>B5MCQ5</accession>
<accession>B7Z254</accession>
<accession>B7Z4M8</accession>
<accession>F8WA83</accession>
<accession>Q53RC7</accession>
<accession>Q6ZSH5</accession>
<accession>Q99778</accession>
<name>PDIA6_HUMAN</name>
<organism>
    <name type="scientific">Homo sapiens</name>
    <name type="common">Human</name>
    <dbReference type="NCBI Taxonomy" id="9606"/>
    <lineage>
        <taxon>Eukaryota</taxon>
        <taxon>Metazoa</taxon>
        <taxon>Chordata</taxon>
        <taxon>Craniata</taxon>
        <taxon>Vertebrata</taxon>
        <taxon>Euteleostomi</taxon>
        <taxon>Mammalia</taxon>
        <taxon>Eutheria</taxon>
        <taxon>Euarchontoglires</taxon>
        <taxon>Primates</taxon>
        <taxon>Haplorrhini</taxon>
        <taxon>Catarrhini</taxon>
        <taxon>Hominidae</taxon>
        <taxon>Homo</taxon>
    </lineage>
</organism>
<evidence type="ECO:0000250" key="1"/>
<evidence type="ECO:0000255" key="2">
    <source>
        <dbReference type="PROSITE-ProRule" id="PRU00691"/>
    </source>
</evidence>
<evidence type="ECO:0000255" key="3">
    <source>
        <dbReference type="PROSITE-ProRule" id="PRU10138"/>
    </source>
</evidence>
<evidence type="ECO:0000256" key="4">
    <source>
        <dbReference type="SAM" id="MobiDB-lite"/>
    </source>
</evidence>
<evidence type="ECO:0000269" key="5">
    <source>
    </source>
</evidence>
<evidence type="ECO:0000269" key="6">
    <source>
    </source>
</evidence>
<evidence type="ECO:0000269" key="7">
    <source>
    </source>
</evidence>
<evidence type="ECO:0000269" key="8">
    <source>
    </source>
</evidence>
<evidence type="ECO:0000269" key="9">
    <source>
    </source>
</evidence>
<evidence type="ECO:0000269" key="10">
    <source>
    </source>
</evidence>
<evidence type="ECO:0000269" key="11">
    <source>
    </source>
</evidence>
<evidence type="ECO:0000269" key="12">
    <source>
    </source>
</evidence>
<evidence type="ECO:0000269" key="13">
    <source>
    </source>
</evidence>
<evidence type="ECO:0000269" key="14">
    <source>
    </source>
</evidence>
<evidence type="ECO:0000269" key="15">
    <source>
    </source>
</evidence>
<evidence type="ECO:0000303" key="16">
    <source>
    </source>
</evidence>
<evidence type="ECO:0000305" key="17"/>
<evidence type="ECO:0007744" key="18">
    <source>
    </source>
</evidence>
<evidence type="ECO:0007744" key="19">
    <source>
    </source>
</evidence>
<evidence type="ECO:0007744" key="20">
    <source>
    </source>
</evidence>
<evidence type="ECO:0007744" key="21">
    <source>
    </source>
</evidence>
<evidence type="ECO:0007744" key="22">
    <source>
    </source>
</evidence>
<evidence type="ECO:0007744" key="23">
    <source>
    </source>
</evidence>
<evidence type="ECO:0007744" key="24">
    <source>
    </source>
</evidence>
<evidence type="ECO:0007744" key="25">
    <source>
    </source>
</evidence>
<evidence type="ECO:0007744" key="26">
    <source>
    </source>
</evidence>
<evidence type="ECO:0007829" key="27">
    <source>
        <dbReference type="PDB" id="1X5D"/>
    </source>
</evidence>
<evidence type="ECO:0007829" key="28">
    <source>
        <dbReference type="PDB" id="4EF0"/>
    </source>
</evidence>
<evidence type="ECO:0007829" key="29">
    <source>
        <dbReference type="PDB" id="4GWR"/>
    </source>
</evidence>
<evidence type="ECO:0007829" key="30">
    <source>
        <dbReference type="PDB" id="8CPQ"/>
    </source>
</evidence>
<sequence>MALLVLGLVSCTFFLAVNGLYSSSDDVIELTPSNFNREVIQSDSLWLVEFYAPWCGHCQRLTPEWKKAATALKDVVKVGAVDADKHHSLGGQYGVQGFPTIKIFGSNKNRPEDYQGGRTGEAIVDAALSALRQLVKDRLGGRSGGYSSGKQGRSDSSSKKDVIELTDDSFDKNVLDSEDVWMVEFYAPWCGHCKNLEPEWAAAASEVKEQTKGKVKLAAVDATVNQVLASRYGIRGFPTIKIFQKGESPVDYDGGRTRSDIVSRALDLFSDNAPPPELLEIINEDIAKRTCEEHQLCVVAVLPHILDTGAAGRNSYLEVLLKLADKYKKKMWGWLWTEAGAQSELETALGIGGFGYPAMAAINARKMKFALLKGSFSEQGINEFLRELSFGRGSTAPVGGGAFPTIVEREPWDGRDGELPVEDDIDLSDVELDDLGKDEL</sequence>
<reference key="1">
    <citation type="journal article" date="1995" name="Gene">
        <title>Cloning and sequencing of the cDNA encoding human P5.</title>
        <authorList>
            <person name="Hayano T."/>
            <person name="Kikuchi M."/>
        </authorList>
    </citation>
    <scope>NUCLEOTIDE SEQUENCE [MRNA] (ISOFORM 1)</scope>
    <source>
        <tissue>Placenta</tissue>
    </source>
</reference>
<reference key="2">
    <citation type="journal article" date="2004" name="Nat. Genet.">
        <title>Complete sequencing and characterization of 21,243 full-length human cDNAs.</title>
        <authorList>
            <person name="Ota T."/>
            <person name="Suzuki Y."/>
            <person name="Nishikawa T."/>
            <person name="Otsuki T."/>
            <person name="Sugiyama T."/>
            <person name="Irie R."/>
            <person name="Wakamatsu A."/>
            <person name="Hayashi K."/>
            <person name="Sato H."/>
            <person name="Nagai K."/>
            <person name="Kimura K."/>
            <person name="Makita H."/>
            <person name="Sekine M."/>
            <person name="Obayashi M."/>
            <person name="Nishi T."/>
            <person name="Shibahara T."/>
            <person name="Tanaka T."/>
            <person name="Ishii S."/>
            <person name="Yamamoto J."/>
            <person name="Saito K."/>
            <person name="Kawai Y."/>
            <person name="Isono Y."/>
            <person name="Nakamura Y."/>
            <person name="Nagahari K."/>
            <person name="Murakami K."/>
            <person name="Yasuda T."/>
            <person name="Iwayanagi T."/>
            <person name="Wagatsuma M."/>
            <person name="Shiratori A."/>
            <person name="Sudo H."/>
            <person name="Hosoiri T."/>
            <person name="Kaku Y."/>
            <person name="Kodaira H."/>
            <person name="Kondo H."/>
            <person name="Sugawara M."/>
            <person name="Takahashi M."/>
            <person name="Kanda K."/>
            <person name="Yokoi T."/>
            <person name="Furuya T."/>
            <person name="Kikkawa E."/>
            <person name="Omura Y."/>
            <person name="Abe K."/>
            <person name="Kamihara K."/>
            <person name="Katsuta N."/>
            <person name="Sato K."/>
            <person name="Tanikawa M."/>
            <person name="Yamazaki M."/>
            <person name="Ninomiya K."/>
            <person name="Ishibashi T."/>
            <person name="Yamashita H."/>
            <person name="Murakawa K."/>
            <person name="Fujimori K."/>
            <person name="Tanai H."/>
            <person name="Kimata M."/>
            <person name="Watanabe M."/>
            <person name="Hiraoka S."/>
            <person name="Chiba Y."/>
            <person name="Ishida S."/>
            <person name="Ono Y."/>
            <person name="Takiguchi S."/>
            <person name="Watanabe S."/>
            <person name="Yosida M."/>
            <person name="Hotuta T."/>
            <person name="Kusano J."/>
            <person name="Kanehori K."/>
            <person name="Takahashi-Fujii A."/>
            <person name="Hara H."/>
            <person name="Tanase T.-O."/>
            <person name="Nomura Y."/>
            <person name="Togiya S."/>
            <person name="Komai F."/>
            <person name="Hara R."/>
            <person name="Takeuchi K."/>
            <person name="Arita M."/>
            <person name="Imose N."/>
            <person name="Musashino K."/>
            <person name="Yuuki H."/>
            <person name="Oshima A."/>
            <person name="Sasaki N."/>
            <person name="Aotsuka S."/>
            <person name="Yoshikawa Y."/>
            <person name="Matsunawa H."/>
            <person name="Ichihara T."/>
            <person name="Shiohata N."/>
            <person name="Sano S."/>
            <person name="Moriya S."/>
            <person name="Momiyama H."/>
            <person name="Satoh N."/>
            <person name="Takami S."/>
            <person name="Terashima Y."/>
            <person name="Suzuki O."/>
            <person name="Nakagawa S."/>
            <person name="Senoh A."/>
            <person name="Mizoguchi H."/>
            <person name="Goto Y."/>
            <person name="Shimizu F."/>
            <person name="Wakebe H."/>
            <person name="Hishigaki H."/>
            <person name="Watanabe T."/>
            <person name="Sugiyama A."/>
            <person name="Takemoto M."/>
            <person name="Kawakami B."/>
            <person name="Yamazaki M."/>
            <person name="Watanabe K."/>
            <person name="Kumagai A."/>
            <person name="Itakura S."/>
            <person name="Fukuzumi Y."/>
            <person name="Fujimori Y."/>
            <person name="Komiyama M."/>
            <person name="Tashiro H."/>
            <person name="Tanigami A."/>
            <person name="Fujiwara T."/>
            <person name="Ono T."/>
            <person name="Yamada K."/>
            <person name="Fujii Y."/>
            <person name="Ozaki K."/>
            <person name="Hirao M."/>
            <person name="Ohmori Y."/>
            <person name="Kawabata A."/>
            <person name="Hikiji T."/>
            <person name="Kobatake N."/>
            <person name="Inagaki H."/>
            <person name="Ikema Y."/>
            <person name="Okamoto S."/>
            <person name="Okitani R."/>
            <person name="Kawakami T."/>
            <person name="Noguchi S."/>
            <person name="Itoh T."/>
            <person name="Shigeta K."/>
            <person name="Senba T."/>
            <person name="Matsumura K."/>
            <person name="Nakajima Y."/>
            <person name="Mizuno T."/>
            <person name="Morinaga M."/>
            <person name="Sasaki M."/>
            <person name="Togashi T."/>
            <person name="Oyama M."/>
            <person name="Hata H."/>
            <person name="Watanabe M."/>
            <person name="Komatsu T."/>
            <person name="Mizushima-Sugano J."/>
            <person name="Satoh T."/>
            <person name="Shirai Y."/>
            <person name="Takahashi Y."/>
            <person name="Nakagawa K."/>
            <person name="Okumura K."/>
            <person name="Nagase T."/>
            <person name="Nomura N."/>
            <person name="Kikuchi H."/>
            <person name="Masuho Y."/>
            <person name="Yamashita R."/>
            <person name="Nakai K."/>
            <person name="Yada T."/>
            <person name="Nakamura Y."/>
            <person name="Ohara O."/>
            <person name="Isogai T."/>
            <person name="Sugano S."/>
        </authorList>
    </citation>
    <scope>NUCLEOTIDE SEQUENCE [LARGE SCALE MRNA] (ISOFORMS 1; 2; 3; 4 AND 5)</scope>
    <scope>VARIANT ARG-214</scope>
    <source>
        <tissue>Amygdala</tissue>
        <tissue>Thalamus</tissue>
    </source>
</reference>
<reference key="3">
    <citation type="journal article" date="2005" name="Nature">
        <title>Generation and annotation of the DNA sequences of human chromosomes 2 and 4.</title>
        <authorList>
            <person name="Hillier L.W."/>
            <person name="Graves T.A."/>
            <person name="Fulton R.S."/>
            <person name="Fulton L.A."/>
            <person name="Pepin K.H."/>
            <person name="Minx P."/>
            <person name="Wagner-McPherson C."/>
            <person name="Layman D."/>
            <person name="Wylie K."/>
            <person name="Sekhon M."/>
            <person name="Becker M.C."/>
            <person name="Fewell G.A."/>
            <person name="Delehaunty K.D."/>
            <person name="Miner T.L."/>
            <person name="Nash W.E."/>
            <person name="Kremitzki C."/>
            <person name="Oddy L."/>
            <person name="Du H."/>
            <person name="Sun H."/>
            <person name="Bradshaw-Cordum H."/>
            <person name="Ali J."/>
            <person name="Carter J."/>
            <person name="Cordes M."/>
            <person name="Harris A."/>
            <person name="Isak A."/>
            <person name="van Brunt A."/>
            <person name="Nguyen C."/>
            <person name="Du F."/>
            <person name="Courtney L."/>
            <person name="Kalicki J."/>
            <person name="Ozersky P."/>
            <person name="Abbott S."/>
            <person name="Armstrong J."/>
            <person name="Belter E.A."/>
            <person name="Caruso L."/>
            <person name="Cedroni M."/>
            <person name="Cotton M."/>
            <person name="Davidson T."/>
            <person name="Desai A."/>
            <person name="Elliott G."/>
            <person name="Erb T."/>
            <person name="Fronick C."/>
            <person name="Gaige T."/>
            <person name="Haakenson W."/>
            <person name="Haglund K."/>
            <person name="Holmes A."/>
            <person name="Harkins R."/>
            <person name="Kim K."/>
            <person name="Kruchowski S.S."/>
            <person name="Strong C.M."/>
            <person name="Grewal N."/>
            <person name="Goyea E."/>
            <person name="Hou S."/>
            <person name="Levy A."/>
            <person name="Martinka S."/>
            <person name="Mead K."/>
            <person name="McLellan M.D."/>
            <person name="Meyer R."/>
            <person name="Randall-Maher J."/>
            <person name="Tomlinson C."/>
            <person name="Dauphin-Kohlberg S."/>
            <person name="Kozlowicz-Reilly A."/>
            <person name="Shah N."/>
            <person name="Swearengen-Shahid S."/>
            <person name="Snider J."/>
            <person name="Strong J.T."/>
            <person name="Thompson J."/>
            <person name="Yoakum M."/>
            <person name="Leonard S."/>
            <person name="Pearman C."/>
            <person name="Trani L."/>
            <person name="Radionenko M."/>
            <person name="Waligorski J.E."/>
            <person name="Wang C."/>
            <person name="Rock S.M."/>
            <person name="Tin-Wollam A.-M."/>
            <person name="Maupin R."/>
            <person name="Latreille P."/>
            <person name="Wendl M.C."/>
            <person name="Yang S.-P."/>
            <person name="Pohl C."/>
            <person name="Wallis J.W."/>
            <person name="Spieth J."/>
            <person name="Bieri T.A."/>
            <person name="Berkowicz N."/>
            <person name="Nelson J.O."/>
            <person name="Osborne J."/>
            <person name="Ding L."/>
            <person name="Meyer R."/>
            <person name="Sabo A."/>
            <person name="Shotland Y."/>
            <person name="Sinha P."/>
            <person name="Wohldmann P.E."/>
            <person name="Cook L.L."/>
            <person name="Hickenbotham M.T."/>
            <person name="Eldred J."/>
            <person name="Williams D."/>
            <person name="Jones T.A."/>
            <person name="She X."/>
            <person name="Ciccarelli F.D."/>
            <person name="Izaurralde E."/>
            <person name="Taylor J."/>
            <person name="Schmutz J."/>
            <person name="Myers R.M."/>
            <person name="Cox D.R."/>
            <person name="Huang X."/>
            <person name="McPherson J.D."/>
            <person name="Mardis E.R."/>
            <person name="Clifton S.W."/>
            <person name="Warren W.C."/>
            <person name="Chinwalla A.T."/>
            <person name="Eddy S.R."/>
            <person name="Marra M.A."/>
            <person name="Ovcharenko I."/>
            <person name="Furey T.S."/>
            <person name="Miller W."/>
            <person name="Eichler E.E."/>
            <person name="Bork P."/>
            <person name="Suyama M."/>
            <person name="Torrents D."/>
            <person name="Waterston R.H."/>
            <person name="Wilson R.K."/>
        </authorList>
    </citation>
    <scope>NUCLEOTIDE SEQUENCE [LARGE SCALE GENOMIC DNA]</scope>
</reference>
<reference key="4">
    <citation type="submission" date="2005-09" db="EMBL/GenBank/DDBJ databases">
        <authorList>
            <person name="Mural R.J."/>
            <person name="Istrail S."/>
            <person name="Sutton G."/>
            <person name="Florea L."/>
            <person name="Halpern A.L."/>
            <person name="Mobarry C.M."/>
            <person name="Lippert R."/>
            <person name="Walenz B."/>
            <person name="Shatkay H."/>
            <person name="Dew I."/>
            <person name="Miller J.R."/>
            <person name="Flanigan M.J."/>
            <person name="Edwards N.J."/>
            <person name="Bolanos R."/>
            <person name="Fasulo D."/>
            <person name="Halldorsson B.V."/>
            <person name="Hannenhalli S."/>
            <person name="Turner R."/>
            <person name="Yooseph S."/>
            <person name="Lu F."/>
            <person name="Nusskern D.R."/>
            <person name="Shue B.C."/>
            <person name="Zheng X.H."/>
            <person name="Zhong F."/>
            <person name="Delcher A.L."/>
            <person name="Huson D.H."/>
            <person name="Kravitz S.A."/>
            <person name="Mouchard L."/>
            <person name="Reinert K."/>
            <person name="Remington K.A."/>
            <person name="Clark A.G."/>
            <person name="Waterman M.S."/>
            <person name="Eichler E.E."/>
            <person name="Adams M.D."/>
            <person name="Hunkapiller M.W."/>
            <person name="Myers E.W."/>
            <person name="Venter J.C."/>
        </authorList>
    </citation>
    <scope>NUCLEOTIDE SEQUENCE [LARGE SCALE GENOMIC DNA]</scope>
</reference>
<reference key="5">
    <citation type="journal article" date="2004" name="Genome Res.">
        <title>The status, quality, and expansion of the NIH full-length cDNA project: the Mammalian Gene Collection (MGC).</title>
        <authorList>
            <consortium name="The MGC Project Team"/>
        </authorList>
    </citation>
    <scope>NUCLEOTIDE SEQUENCE [LARGE SCALE MRNA] (ISOFORM 1)</scope>
    <source>
        <tissue>Placenta</tissue>
    </source>
</reference>
<reference key="6">
    <citation type="journal article" date="1997" name="Genome Res.">
        <title>Large-scale concatenation cDNA sequencing.</title>
        <authorList>
            <person name="Yu W."/>
            <person name="Andersson B."/>
            <person name="Worley K.C."/>
            <person name="Muzny D.M."/>
            <person name="Ding Y."/>
            <person name="Liu W."/>
            <person name="Ricafrente J.Y."/>
            <person name="Wentland M.A."/>
            <person name="Lennon G."/>
            <person name="Gibbs R.A."/>
        </authorList>
    </citation>
    <scope>NUCLEOTIDE SEQUENCE [LARGE SCALE MRNA] OF 20-440 (ISOFORM 1)</scope>
    <scope>VARIANT ARG-214</scope>
    <source>
        <tissue>Brain</tissue>
    </source>
</reference>
<reference key="7">
    <citation type="journal article" date="2009" name="Proc. Natl. Acad. Sci. U.S.A.">
        <title>Global profiling of protease cleavage sites by chemoselective labeling of protein N-termini.</title>
        <authorList>
            <person name="Xu G."/>
            <person name="Shin S.B."/>
            <person name="Jaffrey S.R."/>
        </authorList>
    </citation>
    <scope>PROTEIN SEQUENCE [LARGE SCALE ANALYSIS] OF 20-38</scope>
    <source>
        <tissue>Leukemic T-cell</tissue>
    </source>
</reference>
<reference key="8">
    <citation type="journal article" date="2005" name="Blood">
        <title>A role for the thiol isomerase protein ERP5 in platelet function.</title>
        <authorList>
            <person name="Jordan P.A."/>
            <person name="Stevens J.M."/>
            <person name="Hubbard G.P."/>
            <person name="Barrett N.E."/>
            <person name="Sage T."/>
            <person name="Authi K.S."/>
            <person name="Gibbins J.M."/>
        </authorList>
    </citation>
    <scope>PROTEIN SEQUENCE OF 20-34</scope>
    <scope>FUNCTION</scope>
    <scope>ENZYME ACTIVITY</scope>
    <scope>INTERACTION WITH ITGB3</scope>
    <scope>SUBCELLULAR LOCATION</scope>
    <scope>TISSUE SPECIFICITY</scope>
</reference>
<reference key="9">
    <citation type="submission" date="2004-10" db="UniProtKB">
        <authorList>
            <person name="Bienvenut W.V."/>
        </authorList>
    </citation>
    <scope>PROTEIN SEQUENCE OF 103-138; 195-212; 217-231; 242-289; 314-328 AND 374-386</scope>
    <source>
        <tissue>B-cell lymphoma</tissue>
    </source>
</reference>
<reference key="10">
    <citation type="journal article" date="2002" name="J. Biochem.">
        <title>Functional analysis of human P5, a protein disulfide isomerase homologue.</title>
        <authorList>
            <person name="Kikuchi M."/>
            <person name="Doi E."/>
            <person name="Tsujimoto I."/>
            <person name="Horibe T."/>
            <person name="Tsujimoto Y."/>
        </authorList>
    </citation>
    <scope>FUNCTION</scope>
    <scope>ENZYME ACTIVITY</scope>
    <scope>MUTAGENESIS OF CYS-55; CYS-58; CYS-190 AND CYS-193</scope>
</reference>
<reference key="11">
    <citation type="journal article" date="2002" name="Mol. Biol. Cell">
        <title>A subset of chaperones and folding enzymes form multiprotein complexes in endoplasmic reticulum to bind nascent proteins.</title>
        <authorList>
            <person name="Meunier L."/>
            <person name="Usherwood Y.-K."/>
            <person name="Chung K.T."/>
            <person name="Hendershot L.M."/>
        </authorList>
    </citation>
    <scope>COMPONENT OF A CHAPERONE COMPLEX</scope>
</reference>
<reference key="12">
    <citation type="journal article" date="2003" name="J. Proteome Res.">
        <title>Proteomic analysis of early melanosomes: identification of novel melanosomal proteins.</title>
        <authorList>
            <person name="Basrur V."/>
            <person name="Yang F."/>
            <person name="Kushimoto T."/>
            <person name="Higashimoto Y."/>
            <person name="Yasumoto K."/>
            <person name="Valencia J."/>
            <person name="Muller J."/>
            <person name="Vieira W.D."/>
            <person name="Watabe H."/>
            <person name="Shabanowitz J."/>
            <person name="Hearing V.J."/>
            <person name="Hunt D.F."/>
            <person name="Appella E."/>
        </authorList>
    </citation>
    <scope>SUBCELLULAR LOCATION [LARGE SCALE ANALYSIS]</scope>
    <source>
        <tissue>Melanoma</tissue>
    </source>
</reference>
<reference key="13">
    <citation type="journal article" date="2006" name="Cell">
        <title>Global, in vivo, and site-specific phosphorylation dynamics in signaling networks.</title>
        <authorList>
            <person name="Olsen J.V."/>
            <person name="Blagoev B."/>
            <person name="Gnad F."/>
            <person name="Macek B."/>
            <person name="Kumar C."/>
            <person name="Mortensen P."/>
            <person name="Mann M."/>
        </authorList>
    </citation>
    <scope>PHOSPHORYLATION [LARGE SCALE ANALYSIS] AT SER-428</scope>
    <scope>IDENTIFICATION BY MASS SPECTROMETRY [LARGE SCALE ANALYSIS]</scope>
    <source>
        <tissue>Cervix carcinoma</tissue>
    </source>
</reference>
<reference key="14">
    <citation type="journal article" date="2006" name="J. Proteome Res.">
        <title>Proteomic and bioinformatic characterization of the biogenesis and function of melanosomes.</title>
        <authorList>
            <person name="Chi A."/>
            <person name="Valencia J.C."/>
            <person name="Hu Z.-Z."/>
            <person name="Watabe H."/>
            <person name="Yamaguchi H."/>
            <person name="Mangini N.J."/>
            <person name="Huang H."/>
            <person name="Canfield V.A."/>
            <person name="Cheng K.C."/>
            <person name="Yang F."/>
            <person name="Abe R."/>
            <person name="Yamagishi S."/>
            <person name="Shabanowitz J."/>
            <person name="Hearing V.J."/>
            <person name="Wu C."/>
            <person name="Appella E."/>
            <person name="Hunt D.F."/>
        </authorList>
    </citation>
    <scope>SUBCELLULAR LOCATION [LARGE SCALE ANALYSIS]</scope>
    <source>
        <tissue>Melanoma</tissue>
    </source>
</reference>
<reference key="15">
    <citation type="journal article" date="2006" name="Nat. Biotechnol.">
        <title>A probability-based approach for high-throughput protein phosphorylation analysis and site localization.</title>
        <authorList>
            <person name="Beausoleil S.A."/>
            <person name="Villen J."/>
            <person name="Gerber S.A."/>
            <person name="Rush J."/>
            <person name="Gygi S.P."/>
        </authorList>
    </citation>
    <scope>PHOSPHORYLATION [LARGE SCALE ANALYSIS] AT SER-428</scope>
    <scope>IDENTIFICATION BY MASS SPECTROMETRY [LARGE SCALE ANALYSIS]</scope>
    <source>
        <tissue>Cervix carcinoma</tissue>
    </source>
</reference>
<reference key="16">
    <citation type="journal article" date="2007" name="Nature">
        <title>Disulphide-isomerase-enabled shedding of tumour-associated NKG2D ligands.</title>
        <authorList>
            <person name="Kaiser B.K."/>
            <person name="Yim D."/>
            <person name="Chow I.-T."/>
            <person name="Gonzalez S."/>
            <person name="Dai Z."/>
            <person name="Mann H.H."/>
            <person name="Strong R.K."/>
            <person name="Groh V."/>
            <person name="Spies T."/>
        </authorList>
    </citation>
    <scope>INTERACTION WITH MICA</scope>
</reference>
<reference key="17">
    <citation type="journal article" date="2008" name="Proc. Natl. Acad. Sci. U.S.A.">
        <title>A quantitative atlas of mitotic phosphorylation.</title>
        <authorList>
            <person name="Dephoure N."/>
            <person name="Zhou C."/>
            <person name="Villen J."/>
            <person name="Beausoleil S.A."/>
            <person name="Bakalarski C.E."/>
            <person name="Elledge S.J."/>
            <person name="Gygi S.P."/>
        </authorList>
    </citation>
    <scope>IDENTIFICATION BY MASS SPECTROMETRY [LARGE SCALE ANALYSIS]</scope>
    <source>
        <tissue>Cervix carcinoma</tissue>
    </source>
</reference>
<reference key="18">
    <citation type="journal article" date="2008" name="Proteomics">
        <title>Large-scale phosphoproteome analysis of human liver tissue by enrichment and fractionation of phosphopeptides with strong anion exchange chromatography.</title>
        <authorList>
            <person name="Han G."/>
            <person name="Ye M."/>
            <person name="Zhou H."/>
            <person name="Jiang X."/>
            <person name="Feng S."/>
            <person name="Jiang X."/>
            <person name="Tian R."/>
            <person name="Wan D."/>
            <person name="Zou H."/>
            <person name="Gu J."/>
        </authorList>
    </citation>
    <scope>PHOSPHORYLATION [LARGE SCALE ANALYSIS] AT SER-428</scope>
    <scope>IDENTIFICATION BY MASS SPECTROMETRY [LARGE SCALE ANALYSIS]</scope>
    <source>
        <tissue>Liver</tissue>
    </source>
</reference>
<reference key="19">
    <citation type="journal article" date="2009" name="Anal. Chem.">
        <title>Lys-N and trypsin cover complementary parts of the phosphoproteome in a refined SCX-based approach.</title>
        <authorList>
            <person name="Gauci S."/>
            <person name="Helbig A.O."/>
            <person name="Slijper M."/>
            <person name="Krijgsveld J."/>
            <person name="Heck A.J."/>
            <person name="Mohammed S."/>
        </authorList>
    </citation>
    <scope>IDENTIFICATION BY MASS SPECTROMETRY [LARGE SCALE ANALYSIS]</scope>
</reference>
<reference key="20">
    <citation type="journal article" date="2009" name="Sci. Signal.">
        <title>Quantitative phosphoproteomic analysis of T cell receptor signaling reveals system-wide modulation of protein-protein interactions.</title>
        <authorList>
            <person name="Mayya V."/>
            <person name="Lundgren D.H."/>
            <person name="Hwang S.-I."/>
            <person name="Rezaul K."/>
            <person name="Wu L."/>
            <person name="Eng J.K."/>
            <person name="Rodionov V."/>
            <person name="Han D.K."/>
        </authorList>
    </citation>
    <scope>PHOSPHORYLATION [LARGE SCALE ANALYSIS] AT SER-428</scope>
    <scope>IDENTIFICATION BY MASS SPECTROMETRY [LARGE SCALE ANALYSIS]</scope>
    <source>
        <tissue>Leukemic T-cell</tissue>
    </source>
</reference>
<reference key="21">
    <citation type="journal article" date="2010" name="Sci. Signal.">
        <title>Quantitative phosphoproteomics reveals widespread full phosphorylation site occupancy during mitosis.</title>
        <authorList>
            <person name="Olsen J.V."/>
            <person name="Vermeulen M."/>
            <person name="Santamaria A."/>
            <person name="Kumar C."/>
            <person name="Miller M.L."/>
            <person name="Jensen L.J."/>
            <person name="Gnad F."/>
            <person name="Cox J."/>
            <person name="Jensen T.S."/>
            <person name="Nigg E.A."/>
            <person name="Brunak S."/>
            <person name="Mann M."/>
        </authorList>
    </citation>
    <scope>PHOSPHORYLATION [LARGE SCALE ANALYSIS] AT SER-428</scope>
    <scope>IDENTIFICATION BY MASS SPECTROMETRY [LARGE SCALE ANALYSIS]</scope>
    <source>
        <tissue>Cervix carcinoma</tissue>
    </source>
</reference>
<reference key="22">
    <citation type="journal article" date="2011" name="BMC Syst. Biol.">
        <title>Initial characterization of the human central proteome.</title>
        <authorList>
            <person name="Burkard T.R."/>
            <person name="Planyavsky M."/>
            <person name="Kaupe I."/>
            <person name="Breitwieser F.P."/>
            <person name="Buerckstuemmer T."/>
            <person name="Bennett K.L."/>
            <person name="Superti-Furga G."/>
            <person name="Colinge J."/>
        </authorList>
    </citation>
    <scope>IDENTIFICATION BY MASS SPECTROMETRY [LARGE SCALE ANALYSIS]</scope>
</reference>
<reference key="23">
    <citation type="journal article" date="2011" name="Sci. Signal.">
        <title>System-wide temporal characterization of the proteome and phosphoproteome of human embryonic stem cell differentiation.</title>
        <authorList>
            <person name="Rigbolt K.T."/>
            <person name="Prokhorova T.A."/>
            <person name="Akimov V."/>
            <person name="Henningsen J."/>
            <person name="Johansen P.T."/>
            <person name="Kratchmarova I."/>
            <person name="Kassem M."/>
            <person name="Mann M."/>
            <person name="Olsen J.V."/>
            <person name="Blagoev B."/>
        </authorList>
    </citation>
    <scope>PHOSPHORYLATION [LARGE SCALE ANALYSIS] AT SER-428</scope>
    <scope>IDENTIFICATION BY MASS SPECTROMETRY [LARGE SCALE ANALYSIS]</scope>
</reference>
<reference key="24">
    <citation type="journal article" date="2013" name="J. Proteome Res.">
        <title>Toward a comprehensive characterization of a human cancer cell phosphoproteome.</title>
        <authorList>
            <person name="Zhou H."/>
            <person name="Di Palma S."/>
            <person name="Preisinger C."/>
            <person name="Peng M."/>
            <person name="Polat A.N."/>
            <person name="Heck A.J."/>
            <person name="Mohammed S."/>
        </authorList>
    </citation>
    <scope>PHOSPHORYLATION [LARGE SCALE ANALYSIS] AT SER-158</scope>
    <scope>IDENTIFICATION BY MASS SPECTROMETRY [LARGE SCALE ANALYSIS]</scope>
    <source>
        <tissue>Erythroleukemia</tissue>
    </source>
</reference>
<reference key="25">
    <citation type="journal article" date="2014" name="J. Proteomics">
        <title>An enzyme assisted RP-RPLC approach for in-depth analysis of human liver phosphoproteome.</title>
        <authorList>
            <person name="Bian Y."/>
            <person name="Song C."/>
            <person name="Cheng K."/>
            <person name="Dong M."/>
            <person name="Wang F."/>
            <person name="Huang J."/>
            <person name="Sun D."/>
            <person name="Wang L."/>
            <person name="Ye M."/>
            <person name="Zou H."/>
        </authorList>
    </citation>
    <scope>PHOSPHORYLATION [LARGE SCALE ANALYSIS] AT SER-129 AND SER-428</scope>
    <scope>IDENTIFICATION BY MASS SPECTROMETRY [LARGE SCALE ANALYSIS]</scope>
    <source>
        <tissue>Liver</tissue>
    </source>
</reference>
<reference key="26">
    <citation type="journal article" date="2014" name="Mol. Cell">
        <title>Protein disulfide isomerase A6 controls the decay of IRE1alpha signaling via disulfide-dependent association.</title>
        <authorList>
            <person name="Eletto D."/>
            <person name="Eletto D."/>
            <person name="Dersh D."/>
            <person name="Gidalevitz T."/>
            <person name="Argon Y."/>
        </authorList>
    </citation>
    <scope>FUNCTION</scope>
    <scope>INTERACTION WITH ERN1 AND EIF2AK3</scope>
    <scope>MUTAGENESIS OF CYS-58 AND CYS-193</scope>
</reference>
<reference key="27">
    <citation type="journal article" date="2015" name="Cell">
        <title>A single kinase generates the majority of the secreted phosphoproteome.</title>
        <authorList>
            <person name="Tagliabracci V.S."/>
            <person name="Wiley S.E."/>
            <person name="Guo X."/>
            <person name="Kinch L.N."/>
            <person name="Durrant E."/>
            <person name="Wen J."/>
            <person name="Xiao J."/>
            <person name="Cui J."/>
            <person name="Nguyen K.B."/>
            <person name="Engel J.L."/>
            <person name="Coon J.J."/>
            <person name="Grishin N."/>
            <person name="Pinna L.A."/>
            <person name="Pagliarini D.J."/>
            <person name="Dixon J.E."/>
        </authorList>
    </citation>
    <scope>PHOSPHORYLATION AT SER-156</scope>
</reference>
<reference key="28">
    <citation type="journal article" date="2015" name="Proteomics">
        <title>N-terminome analysis of the human mitochondrial proteome.</title>
        <authorList>
            <person name="Vaca Jacome A.S."/>
            <person name="Rabilloud T."/>
            <person name="Schaeffer-Reiss C."/>
            <person name="Rompais M."/>
            <person name="Ayoub D."/>
            <person name="Lane L."/>
            <person name="Bairoch A."/>
            <person name="Van Dorsselaer A."/>
            <person name="Carapito C."/>
        </authorList>
    </citation>
    <scope>CLEAVAGE OF SIGNAL PEPTIDE [LARGE SCALE ANALYSIS] AFTER GLY-19</scope>
    <scope>IDENTIFICATION BY MASS SPECTROMETRY [LARGE SCALE ANALYSIS]</scope>
</reference>
<reference key="29">
    <citation type="submission" date="2005-11" db="PDB data bank">
        <title>The solution structure of the second thioredoxin-like domain of human protein disulfide-isomerase A6.</title>
        <authorList>
            <consortium name="RIKEN structural genomics initiative (RSGI)"/>
        </authorList>
    </citation>
    <scope>STRUCTURE BY NMR OF 161-280</scope>
</reference>
<protein>
    <recommendedName>
        <fullName>Protein disulfide-isomerase A6</fullName>
        <ecNumber evidence="5 9">5.3.4.1</ecNumber>
    </recommendedName>
    <alternativeName>
        <fullName>Endoplasmic reticulum protein 5</fullName>
        <shortName>ER protein 5</shortName>
        <shortName>ERp5</shortName>
    </alternativeName>
    <alternativeName>
        <fullName>Protein disulfide isomerase P5</fullName>
    </alternativeName>
    <alternativeName>
        <fullName>Thioredoxin domain-containing protein 7</fullName>
    </alternativeName>
</protein>